<comment type="function">
    <text evidence="1">Is the main repressor of the genes involved in the de novo synthesis of purine nucleotides, regulating purB, purC, purEK, purF, purHD, purL, purMN and guaBA expression. PurR is allosterically activated to bind its cognate DNA by binding the purine corepressors, hypoxanthine or guanine, thereby effecting transcription repression.</text>
</comment>
<comment type="pathway">
    <text>Purine metabolism; purine nucleotide biosynthesis [regulation].</text>
</comment>
<comment type="subunit">
    <text evidence="1">Homodimer.</text>
</comment>
<comment type="domain">
    <text evidence="1">Consists of two structural and functional domains: an N-terminal DNA-binding domain, approximately the first 60 residues, and a larger C-terminal domain, approximately 280 residues, which imparts the function of corepressor binding and oligomerization.</text>
</comment>
<accession>A4TIQ4</accession>
<feature type="chain" id="PRO_1000085882" description="HTH-type transcriptional repressor PurR">
    <location>
        <begin position="1"/>
        <end position="341"/>
    </location>
</feature>
<feature type="domain" description="HTH lacI-type" evidence="1">
    <location>
        <begin position="2"/>
        <end position="56"/>
    </location>
</feature>
<feature type="DNA-binding region" description="H-T-H motif" evidence="1">
    <location>
        <begin position="4"/>
        <end position="23"/>
    </location>
</feature>
<feature type="DNA-binding region" evidence="1">
    <location>
        <begin position="48"/>
        <end position="56"/>
    </location>
</feature>
<feature type="binding site" evidence="1">
    <location>
        <position position="73"/>
    </location>
    <ligand>
        <name>hypoxanthine</name>
        <dbReference type="ChEBI" id="CHEBI:17368"/>
    </ligand>
</feature>
<feature type="binding site" evidence="1">
    <location>
        <position position="190"/>
    </location>
    <ligand>
        <name>hypoxanthine</name>
        <dbReference type="ChEBI" id="CHEBI:17368"/>
    </ligand>
</feature>
<feature type="binding site" evidence="1">
    <location>
        <position position="192"/>
    </location>
    <ligand>
        <name>hypoxanthine</name>
        <dbReference type="ChEBI" id="CHEBI:17368"/>
    </ligand>
</feature>
<feature type="binding site" evidence="1">
    <location>
        <position position="221"/>
    </location>
    <ligand>
        <name>hypoxanthine</name>
        <dbReference type="ChEBI" id="CHEBI:17368"/>
    </ligand>
</feature>
<feature type="binding site" evidence="1">
    <location>
        <position position="275"/>
    </location>
    <ligand>
        <name>hypoxanthine</name>
        <dbReference type="ChEBI" id="CHEBI:17368"/>
    </ligand>
</feature>
<evidence type="ECO:0000255" key="1">
    <source>
        <dbReference type="HAMAP-Rule" id="MF_01277"/>
    </source>
</evidence>
<protein>
    <recommendedName>
        <fullName evidence="1">HTH-type transcriptional repressor PurR</fullName>
    </recommendedName>
    <alternativeName>
        <fullName evidence="1">Pur regulon repressor</fullName>
    </alternativeName>
    <alternativeName>
        <fullName evidence="1">Purine nucleotide synthesis repressor</fullName>
    </alternativeName>
</protein>
<gene>
    <name evidence="1" type="primary">purR</name>
    <name type="ordered locus">YPDSF_0760</name>
</gene>
<dbReference type="EMBL" id="CP000668">
    <property type="protein sequence ID" value="ABP39166.1"/>
    <property type="molecule type" value="Genomic_DNA"/>
</dbReference>
<dbReference type="RefSeq" id="WP_002210943.1">
    <property type="nucleotide sequence ID" value="NZ_CP009715.1"/>
</dbReference>
<dbReference type="SMR" id="A4TIQ4"/>
<dbReference type="GeneID" id="57976289"/>
<dbReference type="KEGG" id="ypp:YPDSF_0760"/>
<dbReference type="PATRIC" id="fig|386656.14.peg.3105"/>
<dbReference type="UniPathway" id="UPA00488"/>
<dbReference type="GO" id="GO:0003700">
    <property type="term" value="F:DNA-binding transcription factor activity"/>
    <property type="evidence" value="ECO:0007669"/>
    <property type="project" value="TreeGrafter"/>
</dbReference>
<dbReference type="GO" id="GO:0000976">
    <property type="term" value="F:transcription cis-regulatory region binding"/>
    <property type="evidence" value="ECO:0007669"/>
    <property type="project" value="TreeGrafter"/>
</dbReference>
<dbReference type="GO" id="GO:0045892">
    <property type="term" value="P:negative regulation of DNA-templated transcription"/>
    <property type="evidence" value="ECO:0007669"/>
    <property type="project" value="UniProtKB-UniRule"/>
</dbReference>
<dbReference type="GO" id="GO:0006164">
    <property type="term" value="P:purine nucleotide biosynthetic process"/>
    <property type="evidence" value="ECO:0007669"/>
    <property type="project" value="UniProtKB-UniPathway"/>
</dbReference>
<dbReference type="CDD" id="cd01392">
    <property type="entry name" value="HTH_LacI"/>
    <property type="match status" value="1"/>
</dbReference>
<dbReference type="CDD" id="cd06275">
    <property type="entry name" value="PBP1_PurR"/>
    <property type="match status" value="1"/>
</dbReference>
<dbReference type="FunFam" id="1.10.260.40:FF:000002">
    <property type="entry name" value="HTH-type transcriptional repressor PurR"/>
    <property type="match status" value="1"/>
</dbReference>
<dbReference type="FunFam" id="3.40.50.2300:FF:000045">
    <property type="entry name" value="HTH-type transcriptional repressor PurR"/>
    <property type="match status" value="1"/>
</dbReference>
<dbReference type="Gene3D" id="3.40.50.2300">
    <property type="match status" value="2"/>
</dbReference>
<dbReference type="Gene3D" id="1.10.260.40">
    <property type="entry name" value="lambda repressor-like DNA-binding domains"/>
    <property type="match status" value="1"/>
</dbReference>
<dbReference type="HAMAP" id="MF_01277">
    <property type="entry name" value="HTH_type_PurR"/>
    <property type="match status" value="1"/>
</dbReference>
<dbReference type="InterPro" id="IPR000843">
    <property type="entry name" value="HTH_LacI"/>
</dbReference>
<dbReference type="InterPro" id="IPR046335">
    <property type="entry name" value="LacI/GalR-like_sensor"/>
</dbReference>
<dbReference type="InterPro" id="IPR010982">
    <property type="entry name" value="Lambda_DNA-bd_dom_sf"/>
</dbReference>
<dbReference type="InterPro" id="IPR028082">
    <property type="entry name" value="Peripla_BP_I"/>
</dbReference>
<dbReference type="InterPro" id="IPR023588">
    <property type="entry name" value="Tscrpt_reg_HTH_PurR"/>
</dbReference>
<dbReference type="NCBIfam" id="NF007979">
    <property type="entry name" value="PRK10703.1"/>
    <property type="match status" value="1"/>
</dbReference>
<dbReference type="PANTHER" id="PTHR30146:SF148">
    <property type="entry name" value="HTH-TYPE TRANSCRIPTIONAL REPRESSOR PURR-RELATED"/>
    <property type="match status" value="1"/>
</dbReference>
<dbReference type="PANTHER" id="PTHR30146">
    <property type="entry name" value="LACI-RELATED TRANSCRIPTIONAL REPRESSOR"/>
    <property type="match status" value="1"/>
</dbReference>
<dbReference type="Pfam" id="PF00356">
    <property type="entry name" value="LacI"/>
    <property type="match status" value="1"/>
</dbReference>
<dbReference type="Pfam" id="PF13377">
    <property type="entry name" value="Peripla_BP_3"/>
    <property type="match status" value="1"/>
</dbReference>
<dbReference type="PRINTS" id="PR00036">
    <property type="entry name" value="HTHLACI"/>
</dbReference>
<dbReference type="SMART" id="SM00354">
    <property type="entry name" value="HTH_LACI"/>
    <property type="match status" value="1"/>
</dbReference>
<dbReference type="SUPFAM" id="SSF47413">
    <property type="entry name" value="lambda repressor-like DNA-binding domains"/>
    <property type="match status" value="1"/>
</dbReference>
<dbReference type="SUPFAM" id="SSF53822">
    <property type="entry name" value="Periplasmic binding protein-like I"/>
    <property type="match status" value="1"/>
</dbReference>
<dbReference type="PROSITE" id="PS00356">
    <property type="entry name" value="HTH_LACI_1"/>
    <property type="match status" value="1"/>
</dbReference>
<dbReference type="PROSITE" id="PS50932">
    <property type="entry name" value="HTH_LACI_2"/>
    <property type="match status" value="1"/>
</dbReference>
<reference key="1">
    <citation type="submission" date="2007-02" db="EMBL/GenBank/DDBJ databases">
        <title>Complete sequence of chromosome of Yersinia pestis Pestoides F.</title>
        <authorList>
            <consortium name="US DOE Joint Genome Institute"/>
            <person name="Copeland A."/>
            <person name="Lucas S."/>
            <person name="Lapidus A."/>
            <person name="Barry K."/>
            <person name="Detter J.C."/>
            <person name="Glavina del Rio T."/>
            <person name="Hammon N."/>
            <person name="Israni S."/>
            <person name="Dalin E."/>
            <person name="Tice H."/>
            <person name="Pitluck S."/>
            <person name="Di Bartolo G."/>
            <person name="Chain P."/>
            <person name="Malfatti S."/>
            <person name="Shin M."/>
            <person name="Vergez L."/>
            <person name="Schmutz J."/>
            <person name="Larimer F."/>
            <person name="Land M."/>
            <person name="Hauser L."/>
            <person name="Worsham P."/>
            <person name="Chu M."/>
            <person name="Bearden S."/>
            <person name="Garcia E."/>
            <person name="Richardson P."/>
        </authorList>
    </citation>
    <scope>NUCLEOTIDE SEQUENCE [LARGE SCALE GENOMIC DNA]</scope>
    <source>
        <strain>Pestoides F</strain>
    </source>
</reference>
<sequence length="341" mass="37839">MATIKDVAKHAGVSTTTVSHVINKTRFVAENTKAAVWAAIKELHYSPSAVARSLKVNHTKSIGLLATSSEAPYFAEVIEAVENSCYSKGYTLILCNSHNNLDKQKAYLAMLAQKRVDGLLVMCSEYPDQLLGMLEDYRNIPMVVMDWGTARGDFTDSIIDNAFEGGYLAGRYLIERGHRDIGAIPGQLARNTGGGRHQGFLKALEEANIPVREEWIVQGDFEPESGYKAMHQILTQKHRPTAVFCGGDIMAMGAICAADELGLRVPQDISVIGYDNVRNARYFSPALTTIHQPKERLGETAFAMLLDRIVSKREDPQTIEVHPKLVERRSVADGPFRDYRR</sequence>
<proteinExistence type="inferred from homology"/>
<name>PURR_YERPP</name>
<organism>
    <name type="scientific">Yersinia pestis (strain Pestoides F)</name>
    <dbReference type="NCBI Taxonomy" id="386656"/>
    <lineage>
        <taxon>Bacteria</taxon>
        <taxon>Pseudomonadati</taxon>
        <taxon>Pseudomonadota</taxon>
        <taxon>Gammaproteobacteria</taxon>
        <taxon>Enterobacterales</taxon>
        <taxon>Yersiniaceae</taxon>
        <taxon>Yersinia</taxon>
    </lineage>
</organism>
<keyword id="KW-0238">DNA-binding</keyword>
<keyword id="KW-0658">Purine biosynthesis</keyword>
<keyword id="KW-0678">Repressor</keyword>
<keyword id="KW-0804">Transcription</keyword>
<keyword id="KW-0805">Transcription regulation</keyword>